<reference key="1">
    <citation type="journal article" date="2002" name="Science">
        <title>50 million years of genomic stasis in endosymbiotic bacteria.</title>
        <authorList>
            <person name="Tamas I."/>
            <person name="Klasson L."/>
            <person name="Canbaeck B."/>
            <person name="Naeslund A.K."/>
            <person name="Eriksson A.-S."/>
            <person name="Wernegreen J.J."/>
            <person name="Sandstroem J.P."/>
            <person name="Moran N.A."/>
            <person name="Andersson S.G.E."/>
        </authorList>
    </citation>
    <scope>NUCLEOTIDE SEQUENCE [LARGE SCALE GENOMIC DNA]</scope>
    <source>
        <strain>Sg</strain>
    </source>
</reference>
<keyword id="KW-0436">Ligase</keyword>
<keyword id="KW-0597">Phosphoprotein</keyword>
<keyword id="KW-0662">Pyridine nucleotide biosynthesis</keyword>
<protein>
    <recommendedName>
        <fullName evidence="1">Nicotinate phosphoribosyltransferase</fullName>
        <shortName evidence="1">NAPRTase</shortName>
        <ecNumber evidence="1">6.3.4.21</ecNumber>
    </recommendedName>
</protein>
<accession>Q8K9I6</accession>
<proteinExistence type="inferred from homology"/>
<comment type="function">
    <text evidence="1">Catalyzes the synthesis of beta-nicotinate D-ribonucleotide from nicotinate and 5-phospho-D-ribose 1-phosphate at the expense of ATP.</text>
</comment>
<comment type="catalytic activity">
    <reaction evidence="1">
        <text>nicotinate + 5-phospho-alpha-D-ribose 1-diphosphate + ATP + H2O = nicotinate beta-D-ribonucleotide + ADP + phosphate + diphosphate</text>
        <dbReference type="Rhea" id="RHEA:36163"/>
        <dbReference type="ChEBI" id="CHEBI:15377"/>
        <dbReference type="ChEBI" id="CHEBI:30616"/>
        <dbReference type="ChEBI" id="CHEBI:32544"/>
        <dbReference type="ChEBI" id="CHEBI:33019"/>
        <dbReference type="ChEBI" id="CHEBI:43474"/>
        <dbReference type="ChEBI" id="CHEBI:57502"/>
        <dbReference type="ChEBI" id="CHEBI:58017"/>
        <dbReference type="ChEBI" id="CHEBI:456216"/>
        <dbReference type="EC" id="6.3.4.21"/>
    </reaction>
</comment>
<comment type="pathway">
    <text evidence="1">Cofactor biosynthesis; NAD(+) biosynthesis; nicotinate D-ribonucleotide from nicotinate: step 1/1.</text>
</comment>
<comment type="PTM">
    <text evidence="1">Transiently phosphorylated on a His residue during the reaction cycle. Phosphorylation strongly increases the affinity for substrates and increases the rate of nicotinate D-ribonucleotide production. Dephosphorylation regenerates the low-affinity form of the enzyme, leading to product release.</text>
</comment>
<comment type="similarity">
    <text evidence="1">Belongs to the NAPRTase family.</text>
</comment>
<evidence type="ECO:0000255" key="1">
    <source>
        <dbReference type="HAMAP-Rule" id="MF_00570"/>
    </source>
</evidence>
<name>PNCB_BUCAP</name>
<dbReference type="EC" id="6.3.4.21" evidence="1"/>
<dbReference type="EMBL" id="AE013218">
    <property type="protein sequence ID" value="AAM67902.1"/>
    <property type="molecule type" value="Genomic_DNA"/>
</dbReference>
<dbReference type="RefSeq" id="WP_011053869.1">
    <property type="nucleotide sequence ID" value="NC_004061.1"/>
</dbReference>
<dbReference type="SMR" id="Q8K9I6"/>
<dbReference type="STRING" id="198804.BUsg_349"/>
<dbReference type="GeneID" id="93003819"/>
<dbReference type="KEGG" id="bas:BUsg_349"/>
<dbReference type="eggNOG" id="COG1488">
    <property type="taxonomic scope" value="Bacteria"/>
</dbReference>
<dbReference type="HOGENOM" id="CLU_030991_1_0_6"/>
<dbReference type="UniPathway" id="UPA00253">
    <property type="reaction ID" value="UER00457"/>
</dbReference>
<dbReference type="Proteomes" id="UP000000416">
    <property type="component" value="Chromosome"/>
</dbReference>
<dbReference type="GO" id="GO:0005829">
    <property type="term" value="C:cytosol"/>
    <property type="evidence" value="ECO:0007669"/>
    <property type="project" value="TreeGrafter"/>
</dbReference>
<dbReference type="GO" id="GO:0004516">
    <property type="term" value="F:nicotinate phosphoribosyltransferase activity"/>
    <property type="evidence" value="ECO:0007669"/>
    <property type="project" value="UniProtKB-UniRule"/>
</dbReference>
<dbReference type="GO" id="GO:0034355">
    <property type="term" value="P:NAD biosynthetic process via the salvage pathway"/>
    <property type="evidence" value="ECO:0007669"/>
    <property type="project" value="TreeGrafter"/>
</dbReference>
<dbReference type="CDD" id="cd01401">
    <property type="entry name" value="PncB_like"/>
    <property type="match status" value="1"/>
</dbReference>
<dbReference type="Gene3D" id="3.20.140.10">
    <property type="entry name" value="nicotinate phosphoribosyltransferase"/>
    <property type="match status" value="1"/>
</dbReference>
<dbReference type="HAMAP" id="MF_00570">
    <property type="entry name" value="NAPRTase"/>
    <property type="match status" value="1"/>
</dbReference>
<dbReference type="InterPro" id="IPR041525">
    <property type="entry name" value="N/Namide_PRibTrfase"/>
</dbReference>
<dbReference type="InterPro" id="IPR040727">
    <property type="entry name" value="NAPRTase_N"/>
</dbReference>
<dbReference type="InterPro" id="IPR006406">
    <property type="entry name" value="Nic_PRibTrfase"/>
</dbReference>
<dbReference type="InterPro" id="IPR007229">
    <property type="entry name" value="Nic_PRibTrfase-Fam"/>
</dbReference>
<dbReference type="InterPro" id="IPR036068">
    <property type="entry name" value="Nicotinate_pribotase-like_C"/>
</dbReference>
<dbReference type="NCBIfam" id="TIGR01514">
    <property type="entry name" value="NAPRTase"/>
    <property type="match status" value="1"/>
</dbReference>
<dbReference type="NCBIfam" id="NF003704">
    <property type="entry name" value="PRK05321.1"/>
    <property type="match status" value="1"/>
</dbReference>
<dbReference type="PANTHER" id="PTHR11098">
    <property type="entry name" value="NICOTINATE PHOSPHORIBOSYLTRANSFERASE"/>
    <property type="match status" value="1"/>
</dbReference>
<dbReference type="PANTHER" id="PTHR11098:SF1">
    <property type="entry name" value="NICOTINATE PHOSPHORIBOSYLTRANSFERASE"/>
    <property type="match status" value="1"/>
</dbReference>
<dbReference type="Pfam" id="PF04095">
    <property type="entry name" value="NAPRTase"/>
    <property type="match status" value="1"/>
</dbReference>
<dbReference type="Pfam" id="PF17767">
    <property type="entry name" value="NAPRTase_N"/>
    <property type="match status" value="1"/>
</dbReference>
<dbReference type="PIRSF" id="PIRSF000484">
    <property type="entry name" value="NAPRT"/>
    <property type="match status" value="1"/>
</dbReference>
<dbReference type="SUPFAM" id="SSF51690">
    <property type="entry name" value="Nicotinate/Quinolinate PRTase C-terminal domain-like"/>
    <property type="match status" value="1"/>
</dbReference>
<dbReference type="SUPFAM" id="SSF54675">
    <property type="entry name" value="Nicotinate/Quinolinate PRTase N-terminal domain-like"/>
    <property type="match status" value="1"/>
</dbReference>
<organism>
    <name type="scientific">Buchnera aphidicola subsp. Schizaphis graminum (strain Sg)</name>
    <dbReference type="NCBI Taxonomy" id="198804"/>
    <lineage>
        <taxon>Bacteria</taxon>
        <taxon>Pseudomonadati</taxon>
        <taxon>Pseudomonadota</taxon>
        <taxon>Gammaproteobacteria</taxon>
        <taxon>Enterobacterales</taxon>
        <taxon>Erwiniaceae</taxon>
        <taxon>Buchnera</taxon>
    </lineage>
</organism>
<gene>
    <name evidence="1" type="primary">pncB</name>
    <name type="ordered locus">BUsg_349</name>
</gene>
<sequence>MKQYNYPIVKTLLDTDAYKFYMQQAVFYHYKNVDVVAEFICRGPNILGCYSHILLDQINMMSSLSLSHEEYLYMTTFPFFKKEYLHWLKKFRYNITQVKVDNYHGQLHIRISGLWKEVILWEVPILSLISEIFHRHCYPEITSNIAVQHLNKKLKEFFKKNRDVDLSRLKIVDFGTRRRFSYDVQYSIIKRLKDTFPFLIGSSNYHISRILKLLPVGTQAHEWFQAHQQISSNLRNSQTLALKTWLSQYNQHLSIALTDCITMDSFLRDFNLFFSKSYQGIRHDSGDPVKWGEKAIEHYERLGIDPTTKTLLFSDNLNFRKMISLYKKFNNRVNIIFGIGTKLTCDIPNVKPLNIVIKLVKCNGKPVAKLSDSPGKTFCLDRNFIKSLCKAFDLSLTV</sequence>
<feature type="chain" id="PRO_0000205824" description="Nicotinate phosphoribosyltransferase">
    <location>
        <begin position="1"/>
        <end position="398"/>
    </location>
</feature>
<feature type="modified residue" description="Phosphohistidine; by autocatalysis" evidence="1">
    <location>
        <position position="221"/>
    </location>
</feature>